<accession>C6C9K0</accession>
<protein>
    <recommendedName>
        <fullName evidence="1">Ribosomal RNA small subunit methyltransferase H</fullName>
        <ecNumber evidence="1">2.1.1.199</ecNumber>
    </recommendedName>
    <alternativeName>
        <fullName evidence="1">16S rRNA m(4)C1402 methyltransferase</fullName>
    </alternativeName>
    <alternativeName>
        <fullName evidence="1">rRNA (cytosine-N(4)-)-methyltransferase RsmH</fullName>
    </alternativeName>
</protein>
<evidence type="ECO:0000255" key="1">
    <source>
        <dbReference type="HAMAP-Rule" id="MF_01007"/>
    </source>
</evidence>
<feature type="chain" id="PRO_0000386857" description="Ribosomal RNA small subunit methyltransferase H">
    <location>
        <begin position="1"/>
        <end position="313"/>
    </location>
</feature>
<feature type="binding site" evidence="1">
    <location>
        <begin position="35"/>
        <end position="37"/>
    </location>
    <ligand>
        <name>S-adenosyl-L-methionine</name>
        <dbReference type="ChEBI" id="CHEBI:59789"/>
    </ligand>
</feature>
<feature type="binding site" evidence="1">
    <location>
        <position position="55"/>
    </location>
    <ligand>
        <name>S-adenosyl-L-methionine</name>
        <dbReference type="ChEBI" id="CHEBI:59789"/>
    </ligand>
</feature>
<feature type="binding site" evidence="1">
    <location>
        <position position="79"/>
    </location>
    <ligand>
        <name>S-adenosyl-L-methionine</name>
        <dbReference type="ChEBI" id="CHEBI:59789"/>
    </ligand>
</feature>
<feature type="binding site" evidence="1">
    <location>
        <position position="101"/>
    </location>
    <ligand>
        <name>S-adenosyl-L-methionine</name>
        <dbReference type="ChEBI" id="CHEBI:59789"/>
    </ligand>
</feature>
<feature type="binding site" evidence="1">
    <location>
        <position position="108"/>
    </location>
    <ligand>
        <name>S-adenosyl-L-methionine</name>
        <dbReference type="ChEBI" id="CHEBI:59789"/>
    </ligand>
</feature>
<comment type="function">
    <text evidence="1">Specifically methylates the N4 position of cytidine in position 1402 (C1402) of 16S rRNA.</text>
</comment>
<comment type="catalytic activity">
    <reaction evidence="1">
        <text>cytidine(1402) in 16S rRNA + S-adenosyl-L-methionine = N(4)-methylcytidine(1402) in 16S rRNA + S-adenosyl-L-homocysteine + H(+)</text>
        <dbReference type="Rhea" id="RHEA:42928"/>
        <dbReference type="Rhea" id="RHEA-COMP:10286"/>
        <dbReference type="Rhea" id="RHEA-COMP:10287"/>
        <dbReference type="ChEBI" id="CHEBI:15378"/>
        <dbReference type="ChEBI" id="CHEBI:57856"/>
        <dbReference type="ChEBI" id="CHEBI:59789"/>
        <dbReference type="ChEBI" id="CHEBI:74506"/>
        <dbReference type="ChEBI" id="CHEBI:82748"/>
        <dbReference type="EC" id="2.1.1.199"/>
    </reaction>
</comment>
<comment type="subcellular location">
    <subcellularLocation>
        <location evidence="1">Cytoplasm</location>
    </subcellularLocation>
</comment>
<comment type="similarity">
    <text evidence="1">Belongs to the methyltransferase superfamily. RsmH family.</text>
</comment>
<gene>
    <name evidence="1" type="primary">rsmH</name>
    <name type="synonym">mraW</name>
    <name type="ordered locus">Dd703_0640</name>
</gene>
<dbReference type="EC" id="2.1.1.199" evidence="1"/>
<dbReference type="EMBL" id="CP001654">
    <property type="protein sequence ID" value="ACS84451.1"/>
    <property type="molecule type" value="Genomic_DNA"/>
</dbReference>
<dbReference type="RefSeq" id="WP_012764270.1">
    <property type="nucleotide sequence ID" value="NC_012880.1"/>
</dbReference>
<dbReference type="SMR" id="C6C9K0"/>
<dbReference type="STRING" id="579405.Dd703_0640"/>
<dbReference type="KEGG" id="dda:Dd703_0640"/>
<dbReference type="eggNOG" id="COG0275">
    <property type="taxonomic scope" value="Bacteria"/>
</dbReference>
<dbReference type="HOGENOM" id="CLU_038422_2_0_6"/>
<dbReference type="Proteomes" id="UP000002734">
    <property type="component" value="Chromosome"/>
</dbReference>
<dbReference type="GO" id="GO:0005737">
    <property type="term" value="C:cytoplasm"/>
    <property type="evidence" value="ECO:0007669"/>
    <property type="project" value="UniProtKB-SubCell"/>
</dbReference>
<dbReference type="GO" id="GO:0071424">
    <property type="term" value="F:rRNA (cytosine-N4-)-methyltransferase activity"/>
    <property type="evidence" value="ECO:0007669"/>
    <property type="project" value="UniProtKB-UniRule"/>
</dbReference>
<dbReference type="GO" id="GO:0070475">
    <property type="term" value="P:rRNA base methylation"/>
    <property type="evidence" value="ECO:0007669"/>
    <property type="project" value="UniProtKB-UniRule"/>
</dbReference>
<dbReference type="FunFam" id="1.10.150.170:FF:000001">
    <property type="entry name" value="Ribosomal RNA small subunit methyltransferase H"/>
    <property type="match status" value="1"/>
</dbReference>
<dbReference type="Gene3D" id="1.10.150.170">
    <property type="entry name" value="Putative methyltransferase TM0872, insert domain"/>
    <property type="match status" value="1"/>
</dbReference>
<dbReference type="Gene3D" id="3.40.50.150">
    <property type="entry name" value="Vaccinia Virus protein VP39"/>
    <property type="match status" value="1"/>
</dbReference>
<dbReference type="HAMAP" id="MF_01007">
    <property type="entry name" value="16SrRNA_methyltr_H"/>
    <property type="match status" value="1"/>
</dbReference>
<dbReference type="InterPro" id="IPR002903">
    <property type="entry name" value="RsmH"/>
</dbReference>
<dbReference type="InterPro" id="IPR023397">
    <property type="entry name" value="SAM-dep_MeTrfase_MraW_recog"/>
</dbReference>
<dbReference type="InterPro" id="IPR029063">
    <property type="entry name" value="SAM-dependent_MTases_sf"/>
</dbReference>
<dbReference type="NCBIfam" id="TIGR00006">
    <property type="entry name" value="16S rRNA (cytosine(1402)-N(4))-methyltransferase RsmH"/>
    <property type="match status" value="1"/>
</dbReference>
<dbReference type="PANTHER" id="PTHR11265:SF0">
    <property type="entry name" value="12S RRNA N4-METHYLCYTIDINE METHYLTRANSFERASE"/>
    <property type="match status" value="1"/>
</dbReference>
<dbReference type="PANTHER" id="PTHR11265">
    <property type="entry name" value="S-ADENOSYL-METHYLTRANSFERASE MRAW"/>
    <property type="match status" value="1"/>
</dbReference>
<dbReference type="Pfam" id="PF01795">
    <property type="entry name" value="Methyltransf_5"/>
    <property type="match status" value="1"/>
</dbReference>
<dbReference type="PIRSF" id="PIRSF004486">
    <property type="entry name" value="MraW"/>
    <property type="match status" value="1"/>
</dbReference>
<dbReference type="SUPFAM" id="SSF81799">
    <property type="entry name" value="Putative methyltransferase TM0872, insert domain"/>
    <property type="match status" value="1"/>
</dbReference>
<dbReference type="SUPFAM" id="SSF53335">
    <property type="entry name" value="S-adenosyl-L-methionine-dependent methyltransferases"/>
    <property type="match status" value="1"/>
</dbReference>
<name>RSMH_MUSP7</name>
<reference key="1">
    <citation type="submission" date="2009-06" db="EMBL/GenBank/DDBJ databases">
        <title>Complete sequence of Dickeya dadantii Ech703.</title>
        <authorList>
            <consortium name="US DOE Joint Genome Institute"/>
            <person name="Lucas S."/>
            <person name="Copeland A."/>
            <person name="Lapidus A."/>
            <person name="Glavina del Rio T."/>
            <person name="Dalin E."/>
            <person name="Tice H."/>
            <person name="Bruce D."/>
            <person name="Goodwin L."/>
            <person name="Pitluck S."/>
            <person name="Chertkov O."/>
            <person name="Brettin T."/>
            <person name="Detter J.C."/>
            <person name="Han C."/>
            <person name="Larimer F."/>
            <person name="Land M."/>
            <person name="Hauser L."/>
            <person name="Kyrpides N."/>
            <person name="Mikhailova N."/>
            <person name="Balakrishnan V."/>
            <person name="Glasner J."/>
            <person name="Perna N.T."/>
        </authorList>
    </citation>
    <scope>NUCLEOTIDE SEQUENCE [LARGE SCALE GENOMIC DNA]</scope>
    <source>
        <strain>Ech703</strain>
    </source>
</reference>
<keyword id="KW-0963">Cytoplasm</keyword>
<keyword id="KW-0489">Methyltransferase</keyword>
<keyword id="KW-0698">rRNA processing</keyword>
<keyword id="KW-0949">S-adenosyl-L-methionine</keyword>
<keyword id="KW-0808">Transferase</keyword>
<sequence length="313" mass="34421">MAETFKHTTVLLDEAVNGLNIRSNGIYIDGTFGRGGHSRLILSHLGTDGQLLAIDRDPQAVSAASAIHDARFSIIHGPFSSLADYVAERGLVGRIDGILLDLGVSSPQLDDPERGFSFMRDGPLDMRMDPSRGVSAAEWLMNAEADDIAWVLKTFGEERFAKRIARAIVERNRVEPLTRTKALAELIAAACPIREKHKHPATRSFQAIRIYINSELDEIERALEGALQVLAPHGRLSVISFHSLEDRIVKRFIRQHSRGPQVPAGLPLTEAQLKSQGGRTLKAVGKMMPSESEVGENPRARSSVLRFAERLPA</sequence>
<proteinExistence type="inferred from homology"/>
<organism>
    <name type="scientific">Musicola paradisiaca (strain Ech703)</name>
    <name type="common">Dickeya paradisiaca</name>
    <name type="synonym">Dickeya dadantii</name>
    <dbReference type="NCBI Taxonomy" id="579405"/>
    <lineage>
        <taxon>Bacteria</taxon>
        <taxon>Pseudomonadati</taxon>
        <taxon>Pseudomonadota</taxon>
        <taxon>Gammaproteobacteria</taxon>
        <taxon>Enterobacterales</taxon>
        <taxon>Pectobacteriaceae</taxon>
        <taxon>Musicola</taxon>
    </lineage>
</organism>